<dbReference type="EMBL" id="CP000419">
    <property type="protein sequence ID" value="ABJ67005.1"/>
    <property type="molecule type" value="Genomic_DNA"/>
</dbReference>
<dbReference type="RefSeq" id="WP_011681714.1">
    <property type="nucleotide sequence ID" value="NZ_CP086001.1"/>
</dbReference>
<dbReference type="SMR" id="Q03IG7"/>
<dbReference type="KEGG" id="ste:STER_1891"/>
<dbReference type="HOGENOM" id="CLU_098841_0_1_9"/>
<dbReference type="GO" id="GO:0022625">
    <property type="term" value="C:cytosolic large ribosomal subunit"/>
    <property type="evidence" value="ECO:0007669"/>
    <property type="project" value="TreeGrafter"/>
</dbReference>
<dbReference type="GO" id="GO:0008097">
    <property type="term" value="F:5S rRNA binding"/>
    <property type="evidence" value="ECO:0007669"/>
    <property type="project" value="TreeGrafter"/>
</dbReference>
<dbReference type="GO" id="GO:0003735">
    <property type="term" value="F:structural constituent of ribosome"/>
    <property type="evidence" value="ECO:0007669"/>
    <property type="project" value="InterPro"/>
</dbReference>
<dbReference type="GO" id="GO:0006412">
    <property type="term" value="P:translation"/>
    <property type="evidence" value="ECO:0007669"/>
    <property type="project" value="UniProtKB-UniRule"/>
</dbReference>
<dbReference type="CDD" id="cd00432">
    <property type="entry name" value="Ribosomal_L18_L5e"/>
    <property type="match status" value="1"/>
</dbReference>
<dbReference type="FunFam" id="3.30.420.100:FF:000001">
    <property type="entry name" value="50S ribosomal protein L18"/>
    <property type="match status" value="1"/>
</dbReference>
<dbReference type="Gene3D" id="3.30.420.100">
    <property type="match status" value="1"/>
</dbReference>
<dbReference type="HAMAP" id="MF_01337_B">
    <property type="entry name" value="Ribosomal_uL18_B"/>
    <property type="match status" value="1"/>
</dbReference>
<dbReference type="InterPro" id="IPR004389">
    <property type="entry name" value="Ribosomal_uL18_bac-type"/>
</dbReference>
<dbReference type="InterPro" id="IPR005484">
    <property type="entry name" value="Ribosomal_uL18_bac/euk"/>
</dbReference>
<dbReference type="NCBIfam" id="TIGR00060">
    <property type="entry name" value="L18_bact"/>
    <property type="match status" value="1"/>
</dbReference>
<dbReference type="PANTHER" id="PTHR12899">
    <property type="entry name" value="39S RIBOSOMAL PROTEIN L18, MITOCHONDRIAL"/>
    <property type="match status" value="1"/>
</dbReference>
<dbReference type="PANTHER" id="PTHR12899:SF3">
    <property type="entry name" value="LARGE RIBOSOMAL SUBUNIT PROTEIN UL18M"/>
    <property type="match status" value="1"/>
</dbReference>
<dbReference type="Pfam" id="PF00861">
    <property type="entry name" value="Ribosomal_L18p"/>
    <property type="match status" value="1"/>
</dbReference>
<dbReference type="SUPFAM" id="SSF53137">
    <property type="entry name" value="Translational machinery components"/>
    <property type="match status" value="1"/>
</dbReference>
<accession>Q03IG7</accession>
<proteinExistence type="inferred from homology"/>
<sequence>MISKPDKNKLRQKRHRRVRGKLSGTADRPRLNIFRSNTGIYAQVIDDVAGVTLASASTLDKEVSKGTKTEQAIVVGKLVAERAVAKGISEVVFDRGGYLYHGRVKALADSARENGLKF</sequence>
<comment type="function">
    <text evidence="1">This is one of the proteins that bind and probably mediate the attachment of the 5S RNA into the large ribosomal subunit, where it forms part of the central protuberance.</text>
</comment>
<comment type="subunit">
    <text evidence="1">Part of the 50S ribosomal subunit; part of the 5S rRNA/L5/L18/L25 subcomplex. Contacts the 5S and 23S rRNAs.</text>
</comment>
<comment type="similarity">
    <text evidence="1">Belongs to the universal ribosomal protein uL18 family.</text>
</comment>
<keyword id="KW-0687">Ribonucleoprotein</keyword>
<keyword id="KW-0689">Ribosomal protein</keyword>
<keyword id="KW-0694">RNA-binding</keyword>
<keyword id="KW-0699">rRNA-binding</keyword>
<reference key="1">
    <citation type="journal article" date="2006" name="Proc. Natl. Acad. Sci. U.S.A.">
        <title>Comparative genomics of the lactic acid bacteria.</title>
        <authorList>
            <person name="Makarova K.S."/>
            <person name="Slesarev A."/>
            <person name="Wolf Y.I."/>
            <person name="Sorokin A."/>
            <person name="Mirkin B."/>
            <person name="Koonin E.V."/>
            <person name="Pavlov A."/>
            <person name="Pavlova N."/>
            <person name="Karamychev V."/>
            <person name="Polouchine N."/>
            <person name="Shakhova V."/>
            <person name="Grigoriev I."/>
            <person name="Lou Y."/>
            <person name="Rohksar D."/>
            <person name="Lucas S."/>
            <person name="Huang K."/>
            <person name="Goodstein D.M."/>
            <person name="Hawkins T."/>
            <person name="Plengvidhya V."/>
            <person name="Welker D."/>
            <person name="Hughes J."/>
            <person name="Goh Y."/>
            <person name="Benson A."/>
            <person name="Baldwin K."/>
            <person name="Lee J.-H."/>
            <person name="Diaz-Muniz I."/>
            <person name="Dosti B."/>
            <person name="Smeianov V."/>
            <person name="Wechter W."/>
            <person name="Barabote R."/>
            <person name="Lorca G."/>
            <person name="Altermann E."/>
            <person name="Barrangou R."/>
            <person name="Ganesan B."/>
            <person name="Xie Y."/>
            <person name="Rawsthorne H."/>
            <person name="Tamir D."/>
            <person name="Parker C."/>
            <person name="Breidt F."/>
            <person name="Broadbent J.R."/>
            <person name="Hutkins R."/>
            <person name="O'Sullivan D."/>
            <person name="Steele J."/>
            <person name="Unlu G."/>
            <person name="Saier M.H. Jr."/>
            <person name="Klaenhammer T."/>
            <person name="Richardson P."/>
            <person name="Kozyavkin S."/>
            <person name="Weimer B.C."/>
            <person name="Mills D.A."/>
        </authorList>
    </citation>
    <scope>NUCLEOTIDE SEQUENCE [LARGE SCALE GENOMIC DNA]</scope>
    <source>
        <strain>ATCC BAA-491 / LMD-9</strain>
    </source>
</reference>
<gene>
    <name evidence="1" type="primary">rplR</name>
    <name type="ordered locus">STER_1891</name>
</gene>
<protein>
    <recommendedName>
        <fullName evidence="1">Large ribosomal subunit protein uL18</fullName>
    </recommendedName>
    <alternativeName>
        <fullName evidence="3">50S ribosomal protein L18</fullName>
    </alternativeName>
</protein>
<organism>
    <name type="scientific">Streptococcus thermophilus (strain ATCC BAA-491 / LMD-9)</name>
    <dbReference type="NCBI Taxonomy" id="322159"/>
    <lineage>
        <taxon>Bacteria</taxon>
        <taxon>Bacillati</taxon>
        <taxon>Bacillota</taxon>
        <taxon>Bacilli</taxon>
        <taxon>Lactobacillales</taxon>
        <taxon>Streptococcaceae</taxon>
        <taxon>Streptococcus</taxon>
    </lineage>
</organism>
<feature type="chain" id="PRO_1000053125" description="Large ribosomal subunit protein uL18">
    <location>
        <begin position="1"/>
        <end position="118"/>
    </location>
</feature>
<feature type="region of interest" description="Disordered" evidence="2">
    <location>
        <begin position="1"/>
        <end position="22"/>
    </location>
</feature>
<feature type="compositionally biased region" description="Basic residues" evidence="2">
    <location>
        <begin position="10"/>
        <end position="20"/>
    </location>
</feature>
<name>RL18_STRTD</name>
<evidence type="ECO:0000255" key="1">
    <source>
        <dbReference type="HAMAP-Rule" id="MF_01337"/>
    </source>
</evidence>
<evidence type="ECO:0000256" key="2">
    <source>
        <dbReference type="SAM" id="MobiDB-lite"/>
    </source>
</evidence>
<evidence type="ECO:0000305" key="3"/>